<comment type="function">
    <text evidence="1">Part of a complex that catalyzes the reversible reduction of CoM-S-S-CoB to the thiol-coenzymes H-S-CoM (coenzyme M) and H-S-CoB (coenzyme B).</text>
</comment>
<comment type="cofactor">
    <cofactor evidence="2">
        <name>[4Fe-4S] cluster</name>
        <dbReference type="ChEBI" id="CHEBI:49883"/>
    </cofactor>
    <text evidence="2">Binds 2 [4Fe-4S] clusters per subunit.</text>
</comment>
<comment type="pathway">
    <text evidence="1">Cofactor metabolism; coenzyme M-coenzyme B heterodisulfide reduction; coenzyme B and coenzyme M from coenzyme M-coenzyme B heterodisulfide: step 1/1.</text>
</comment>
<comment type="subunit">
    <text evidence="1">The heterodisulfide reductase is composed of three subunits; HdrA, HdrB and HdrC.</text>
</comment>
<comment type="similarity">
    <text evidence="3">Belongs to the HdrC family.</text>
</comment>
<keyword id="KW-0004">4Fe-4S</keyword>
<keyword id="KW-0408">Iron</keyword>
<keyword id="KW-0411">Iron-sulfur</keyword>
<keyword id="KW-0479">Metal-binding</keyword>
<keyword id="KW-0484">Methanogenesis</keyword>
<keyword id="KW-0560">Oxidoreductase</keyword>
<keyword id="KW-1185">Reference proteome</keyword>
<keyword id="KW-0677">Repeat</keyword>
<dbReference type="EC" id="1.8.98.-" evidence="3"/>
<dbReference type="EMBL" id="AE009439">
    <property type="protein sequence ID" value="AAM01788.1"/>
    <property type="molecule type" value="Genomic_DNA"/>
</dbReference>
<dbReference type="RefSeq" id="WP_011018943.1">
    <property type="nucleotide sequence ID" value="NC_003551.1"/>
</dbReference>
<dbReference type="SMR" id="Q8TXT7"/>
<dbReference type="FunCoup" id="Q8TXT7">
    <property type="interactions" value="65"/>
</dbReference>
<dbReference type="STRING" id="190192.MK0573"/>
<dbReference type="PaxDb" id="190192-MK0573"/>
<dbReference type="EnsemblBacteria" id="AAM01788">
    <property type="protein sequence ID" value="AAM01788"/>
    <property type="gene ID" value="MK0573"/>
</dbReference>
<dbReference type="GeneID" id="1476674"/>
<dbReference type="KEGG" id="mka:MK0573"/>
<dbReference type="PATRIC" id="fig|190192.8.peg.608"/>
<dbReference type="HOGENOM" id="CLU_121273_0_0_2"/>
<dbReference type="InParanoid" id="Q8TXT7"/>
<dbReference type="OrthoDB" id="144910at2157"/>
<dbReference type="UniPathway" id="UPA00647">
    <property type="reaction ID" value="UER00700"/>
</dbReference>
<dbReference type="Proteomes" id="UP000001826">
    <property type="component" value="Chromosome"/>
</dbReference>
<dbReference type="GO" id="GO:0005886">
    <property type="term" value="C:plasma membrane"/>
    <property type="evidence" value="ECO:0007669"/>
    <property type="project" value="TreeGrafter"/>
</dbReference>
<dbReference type="GO" id="GO:0051539">
    <property type="term" value="F:4 iron, 4 sulfur cluster binding"/>
    <property type="evidence" value="ECO:0007669"/>
    <property type="project" value="UniProtKB-KW"/>
</dbReference>
<dbReference type="GO" id="GO:0051912">
    <property type="term" value="F:CoB--CoM heterodisulfide reductase activity"/>
    <property type="evidence" value="ECO:0007669"/>
    <property type="project" value="InterPro"/>
</dbReference>
<dbReference type="GO" id="GO:0046872">
    <property type="term" value="F:metal ion binding"/>
    <property type="evidence" value="ECO:0007669"/>
    <property type="project" value="UniProtKB-KW"/>
</dbReference>
<dbReference type="GO" id="GO:0015948">
    <property type="term" value="P:methanogenesis"/>
    <property type="evidence" value="ECO:0007669"/>
    <property type="project" value="UniProtKB-KW"/>
</dbReference>
<dbReference type="Gene3D" id="1.10.1060.10">
    <property type="entry name" value="Alpha-helical ferredoxin"/>
    <property type="match status" value="1"/>
</dbReference>
<dbReference type="InterPro" id="IPR017896">
    <property type="entry name" value="4Fe4S_Fe-S-bd"/>
</dbReference>
<dbReference type="InterPro" id="IPR017900">
    <property type="entry name" value="4Fe4S_Fe_S_CS"/>
</dbReference>
<dbReference type="InterPro" id="IPR017680">
    <property type="entry name" value="CoB/CoM_hetero-S_Rdtase_csu"/>
</dbReference>
<dbReference type="InterPro" id="IPR051460">
    <property type="entry name" value="HdrC_iron-sulfur_subunit"/>
</dbReference>
<dbReference type="InterPro" id="IPR009051">
    <property type="entry name" value="Helical_ferredxn"/>
</dbReference>
<dbReference type="NCBIfam" id="TIGR03290">
    <property type="entry name" value="CoB_CoM_SS_C"/>
    <property type="match status" value="1"/>
</dbReference>
<dbReference type="PANTHER" id="PTHR43255:SF1">
    <property type="entry name" value="IRON-SULFUR-BINDING OXIDOREDUCTASE FADF-RELATED"/>
    <property type="match status" value="1"/>
</dbReference>
<dbReference type="PANTHER" id="PTHR43255">
    <property type="entry name" value="IRON-SULFUR-BINDING OXIDOREDUCTASE FADF-RELATED-RELATED"/>
    <property type="match status" value="1"/>
</dbReference>
<dbReference type="Pfam" id="PF13183">
    <property type="entry name" value="Fer4_8"/>
    <property type="match status" value="1"/>
</dbReference>
<dbReference type="SUPFAM" id="SSF46548">
    <property type="entry name" value="alpha-helical ferredoxin"/>
    <property type="match status" value="1"/>
</dbReference>
<dbReference type="PROSITE" id="PS00198">
    <property type="entry name" value="4FE4S_FER_1"/>
    <property type="match status" value="2"/>
</dbReference>
<dbReference type="PROSITE" id="PS51379">
    <property type="entry name" value="4FE4S_FER_2"/>
    <property type="match status" value="2"/>
</dbReference>
<feature type="chain" id="PRO_0000150075" description="CoB--CoM heterodisulfide reductase iron-sulfur subunit C">
    <location>
        <begin position="1"/>
        <end position="192"/>
    </location>
</feature>
<feature type="domain" description="4Fe-4S ferredoxin-type 1" evidence="2">
    <location>
        <begin position="32"/>
        <end position="61"/>
    </location>
</feature>
<feature type="domain" description="4Fe-4S ferredoxin-type 2" evidence="2">
    <location>
        <begin position="75"/>
        <end position="105"/>
    </location>
</feature>
<feature type="binding site" evidence="2">
    <location>
        <position position="41"/>
    </location>
    <ligand>
        <name>[4Fe-4S] cluster</name>
        <dbReference type="ChEBI" id="CHEBI:49883"/>
        <label>1</label>
    </ligand>
</feature>
<feature type="binding site" evidence="2">
    <location>
        <position position="44"/>
    </location>
    <ligand>
        <name>[4Fe-4S] cluster</name>
        <dbReference type="ChEBI" id="CHEBI:49883"/>
        <label>1</label>
    </ligand>
</feature>
<feature type="binding site" evidence="2">
    <location>
        <position position="47"/>
    </location>
    <ligand>
        <name>[4Fe-4S] cluster</name>
        <dbReference type="ChEBI" id="CHEBI:49883"/>
        <label>1</label>
    </ligand>
</feature>
<feature type="binding site" evidence="2">
    <location>
        <position position="51"/>
    </location>
    <ligand>
        <name>[4Fe-4S] cluster</name>
        <dbReference type="ChEBI" id="CHEBI:49883"/>
        <label>2</label>
    </ligand>
</feature>
<feature type="binding site" evidence="2">
    <location>
        <position position="85"/>
    </location>
    <ligand>
        <name>[4Fe-4S] cluster</name>
        <dbReference type="ChEBI" id="CHEBI:49883"/>
        <label>2</label>
    </ligand>
</feature>
<feature type="binding site" evidence="2">
    <location>
        <position position="88"/>
    </location>
    <ligand>
        <name>[4Fe-4S] cluster</name>
        <dbReference type="ChEBI" id="CHEBI:49883"/>
        <label>2</label>
    </ligand>
</feature>
<feature type="binding site" evidence="2">
    <location>
        <position position="91"/>
    </location>
    <ligand>
        <name>[4Fe-4S] cluster</name>
        <dbReference type="ChEBI" id="CHEBI:49883"/>
        <label>2</label>
    </ligand>
</feature>
<feature type="binding site" evidence="2">
    <location>
        <position position="95"/>
    </location>
    <ligand>
        <name>[4Fe-4S] cluster</name>
        <dbReference type="ChEBI" id="CHEBI:49883"/>
        <label>1</label>
    </ligand>
</feature>
<evidence type="ECO:0000250" key="1">
    <source>
        <dbReference type="UniProtKB" id="Q6LY39"/>
    </source>
</evidence>
<evidence type="ECO:0000255" key="2">
    <source>
        <dbReference type="PROSITE-ProRule" id="PRU00711"/>
    </source>
</evidence>
<evidence type="ECO:0000305" key="3"/>
<sequence>MVEPRDTVIREEDLNPDFLEELSELVEPVFEEEEVLSVQACYQCGTCTGSCPSGRRTSYRTRLIMRKLQLGLVDEVIKSDELWMCTTCYTCYERCPRGVKIVDAVKAARNLAAKKGYMAKAHRMVAMFVIKTGHAVPINDEIREVRKNIGLDEVPPTTHRYEEALEEVQKLVKINEFDKLIGYDWEEGDLVD</sequence>
<protein>
    <recommendedName>
        <fullName evidence="3">CoB--CoM heterodisulfide reductase iron-sulfur subunit C</fullName>
        <ecNumber evidence="3">1.8.98.-</ecNumber>
    </recommendedName>
</protein>
<reference key="1">
    <citation type="journal article" date="2002" name="Proc. Natl. Acad. Sci. U.S.A.">
        <title>The complete genome of hyperthermophile Methanopyrus kandleri AV19 and monophyly of archaeal methanogens.</title>
        <authorList>
            <person name="Slesarev A.I."/>
            <person name="Mezhevaya K.V."/>
            <person name="Makarova K.S."/>
            <person name="Polushin N.N."/>
            <person name="Shcherbinina O.V."/>
            <person name="Shakhova V.V."/>
            <person name="Belova G.I."/>
            <person name="Aravind L."/>
            <person name="Natale D.A."/>
            <person name="Rogozin I.B."/>
            <person name="Tatusov R.L."/>
            <person name="Wolf Y.I."/>
            <person name="Stetter K.O."/>
            <person name="Malykh A.G."/>
            <person name="Koonin E.V."/>
            <person name="Kozyavkin S.A."/>
        </authorList>
    </citation>
    <scope>NUCLEOTIDE SEQUENCE [LARGE SCALE GENOMIC DNA]</scope>
    <source>
        <strain>AV19 / DSM 6324 / JCM 9639 / NBRC 100938</strain>
    </source>
</reference>
<organism>
    <name type="scientific">Methanopyrus kandleri (strain AV19 / DSM 6324 / JCM 9639 / NBRC 100938)</name>
    <dbReference type="NCBI Taxonomy" id="190192"/>
    <lineage>
        <taxon>Archaea</taxon>
        <taxon>Methanobacteriati</taxon>
        <taxon>Methanobacteriota</taxon>
        <taxon>Methanomada group</taxon>
        <taxon>Methanopyri</taxon>
        <taxon>Methanopyrales</taxon>
        <taxon>Methanopyraceae</taxon>
        <taxon>Methanopyrus</taxon>
    </lineage>
</organism>
<proteinExistence type="inferred from homology"/>
<name>HDRC_METKA</name>
<accession>Q8TXT7</accession>
<gene>
    <name type="primary">hdrC</name>
    <name type="ordered locus">MK0573</name>
</gene>